<sequence>MKPSSLLLFTTTILLCLSMAQPRATRKGVTPKQGYCPEFLLDCPFVLLPVCSRDKGCKGTKKCCFYYCQMRCVEPWTTLT</sequence>
<protein>
    <recommendedName>
        <fullName evidence="8">WAP four-disulfide core domain protein 15A</fullName>
    </recommendedName>
</protein>
<keyword id="KW-0044">Antibiotic</keyword>
<keyword id="KW-0929">Antimicrobial</keyword>
<keyword id="KW-1015">Disulfide bond</keyword>
<keyword id="KW-1185">Reference proteome</keyword>
<keyword id="KW-0964">Secreted</keyword>
<keyword id="KW-0732">Signal</keyword>
<organism>
    <name type="scientific">Mus musculus</name>
    <name type="common">Mouse</name>
    <dbReference type="NCBI Taxonomy" id="10090"/>
    <lineage>
        <taxon>Eukaryota</taxon>
        <taxon>Metazoa</taxon>
        <taxon>Chordata</taxon>
        <taxon>Craniata</taxon>
        <taxon>Vertebrata</taxon>
        <taxon>Euteleostomi</taxon>
        <taxon>Mammalia</taxon>
        <taxon>Eutheria</taxon>
        <taxon>Euarchontoglires</taxon>
        <taxon>Glires</taxon>
        <taxon>Rodentia</taxon>
        <taxon>Myomorpha</taxon>
        <taxon>Muroidea</taxon>
        <taxon>Muridae</taxon>
        <taxon>Murinae</taxon>
        <taxon>Mus</taxon>
        <taxon>Mus</taxon>
    </lineage>
</organism>
<proteinExistence type="inferred from homology"/>
<accession>Q8BH89</accession>
<gene>
    <name evidence="8" type="primary">Wfdc15a</name>
</gene>
<comment type="function">
    <text evidence="1">Antibacterial protein.</text>
</comment>
<comment type="subcellular location">
    <subcellularLocation>
        <location evidence="5">Secreted</location>
    </subcellularLocation>
</comment>
<evidence type="ECO:0000250" key="1"/>
<evidence type="ECO:0000250" key="2">
    <source>
        <dbReference type="UniProtKB" id="P19957"/>
    </source>
</evidence>
<evidence type="ECO:0000255" key="3"/>
<evidence type="ECO:0000255" key="4">
    <source>
        <dbReference type="PROSITE-ProRule" id="PRU00722"/>
    </source>
</evidence>
<evidence type="ECO:0000305" key="5"/>
<evidence type="ECO:0000312" key="6">
    <source>
        <dbReference type="EMBL" id="AAI00424.1"/>
    </source>
</evidence>
<evidence type="ECO:0000312" key="7">
    <source>
        <dbReference type="EMBL" id="BAC25151.1"/>
    </source>
</evidence>
<evidence type="ECO:0000312" key="8">
    <source>
        <dbReference type="MGI" id="MGI:1915471"/>
    </source>
</evidence>
<dbReference type="EMBL" id="AK006775">
    <property type="protein sequence ID" value="BAC25151.1"/>
    <property type="molecule type" value="mRNA"/>
</dbReference>
<dbReference type="EMBL" id="AK018854">
    <property type="protein sequence ID" value="BAC25567.1"/>
    <property type="molecule type" value="mRNA"/>
</dbReference>
<dbReference type="EMBL" id="AK018888">
    <property type="protein sequence ID" value="BAC25569.1"/>
    <property type="molecule type" value="mRNA"/>
</dbReference>
<dbReference type="EMBL" id="AK018909">
    <property type="protein sequence ID" value="BAC25570.1"/>
    <property type="molecule type" value="mRNA"/>
</dbReference>
<dbReference type="EMBL" id="AL591512">
    <property type="status" value="NOT_ANNOTATED_CDS"/>
    <property type="molecule type" value="Genomic_DNA"/>
</dbReference>
<dbReference type="EMBL" id="BC100423">
    <property type="protein sequence ID" value="AAI00424.1"/>
    <property type="molecule type" value="mRNA"/>
</dbReference>
<dbReference type="CCDS" id="CCDS38319.1"/>
<dbReference type="RefSeq" id="NP_899094.1">
    <property type="nucleotide sequence ID" value="NM_183271.3"/>
</dbReference>
<dbReference type="SMR" id="Q8BH89"/>
<dbReference type="FunCoup" id="Q8BH89">
    <property type="interactions" value="8"/>
</dbReference>
<dbReference type="STRING" id="10090.ENSMUSP00000070718"/>
<dbReference type="MEROPS" id="I17.002"/>
<dbReference type="PaxDb" id="10090-ENSMUSP00000070718"/>
<dbReference type="ProteomicsDB" id="297555"/>
<dbReference type="DNASU" id="68221"/>
<dbReference type="Ensembl" id="ENSMUST00000063251.3">
    <property type="protein sequence ID" value="ENSMUSP00000070718.3"/>
    <property type="gene ID" value="ENSMUSG00000051769.3"/>
</dbReference>
<dbReference type="GeneID" id="68221"/>
<dbReference type="KEGG" id="mmu:68221"/>
<dbReference type="UCSC" id="uc008nty.1">
    <property type="organism name" value="mouse"/>
</dbReference>
<dbReference type="AGR" id="MGI:1915471"/>
<dbReference type="CTD" id="68221"/>
<dbReference type="MGI" id="MGI:1915471">
    <property type="gene designation" value="Wfdc15a"/>
</dbReference>
<dbReference type="VEuPathDB" id="HostDB:ENSMUSG00000051769"/>
<dbReference type="eggNOG" id="ENOG502TEXR">
    <property type="taxonomic scope" value="Eukaryota"/>
</dbReference>
<dbReference type="GeneTree" id="ENSGT00390000002529"/>
<dbReference type="HOGENOM" id="CLU_200089_0_0_1"/>
<dbReference type="InParanoid" id="Q8BH89"/>
<dbReference type="OMA" id="AKKCCFY"/>
<dbReference type="OrthoDB" id="9794641at2759"/>
<dbReference type="PhylomeDB" id="Q8BH89"/>
<dbReference type="TreeFam" id="TF339673"/>
<dbReference type="BioGRID-ORCS" id="68221">
    <property type="hits" value="1 hit in 73 CRISPR screens"/>
</dbReference>
<dbReference type="ChiTaRS" id="Wfdc15a">
    <property type="organism name" value="mouse"/>
</dbReference>
<dbReference type="PRO" id="PR:Q8BH89"/>
<dbReference type="Proteomes" id="UP000000589">
    <property type="component" value="Chromosome 2"/>
</dbReference>
<dbReference type="RNAct" id="Q8BH89">
    <property type="molecule type" value="protein"/>
</dbReference>
<dbReference type="Bgee" id="ENSMUSG00000051769">
    <property type="expression patterns" value="Expressed in spermatocyte and 23 other cell types or tissues"/>
</dbReference>
<dbReference type="GO" id="GO:0005576">
    <property type="term" value="C:extracellular region"/>
    <property type="evidence" value="ECO:0007669"/>
    <property type="project" value="UniProtKB-SubCell"/>
</dbReference>
<dbReference type="GO" id="GO:0030414">
    <property type="term" value="F:peptidase inhibitor activity"/>
    <property type="evidence" value="ECO:0007669"/>
    <property type="project" value="InterPro"/>
</dbReference>
<dbReference type="GO" id="GO:0042742">
    <property type="term" value="P:defense response to bacterium"/>
    <property type="evidence" value="ECO:0007669"/>
    <property type="project" value="UniProtKB-KW"/>
</dbReference>
<dbReference type="Gene3D" id="4.10.75.10">
    <property type="entry name" value="Elafin-like"/>
    <property type="match status" value="1"/>
</dbReference>
<dbReference type="InterPro" id="IPR036645">
    <property type="entry name" value="Elafin-like_sf"/>
</dbReference>
<dbReference type="InterPro" id="IPR008197">
    <property type="entry name" value="WAP_dom"/>
</dbReference>
<dbReference type="Pfam" id="PF00095">
    <property type="entry name" value="WAP"/>
    <property type="match status" value="1"/>
</dbReference>
<dbReference type="PRINTS" id="PR00003">
    <property type="entry name" value="4DISULPHCORE"/>
</dbReference>
<dbReference type="SMART" id="SM00217">
    <property type="entry name" value="WAP"/>
    <property type="match status" value="1"/>
</dbReference>
<dbReference type="SUPFAM" id="SSF57256">
    <property type="entry name" value="Elafin-like"/>
    <property type="match status" value="1"/>
</dbReference>
<dbReference type="PROSITE" id="PS51390">
    <property type="entry name" value="WAP"/>
    <property type="match status" value="1"/>
</dbReference>
<name>WF15A_MOUSE</name>
<reference evidence="7" key="1">
    <citation type="journal article" date="2005" name="Science">
        <title>The transcriptional landscape of the mammalian genome.</title>
        <authorList>
            <person name="Carninci P."/>
            <person name="Kasukawa T."/>
            <person name="Katayama S."/>
            <person name="Gough J."/>
            <person name="Frith M.C."/>
            <person name="Maeda N."/>
            <person name="Oyama R."/>
            <person name="Ravasi T."/>
            <person name="Lenhard B."/>
            <person name="Wells C."/>
            <person name="Kodzius R."/>
            <person name="Shimokawa K."/>
            <person name="Bajic V.B."/>
            <person name="Brenner S.E."/>
            <person name="Batalov S."/>
            <person name="Forrest A.R."/>
            <person name="Zavolan M."/>
            <person name="Davis M.J."/>
            <person name="Wilming L.G."/>
            <person name="Aidinis V."/>
            <person name="Allen J.E."/>
            <person name="Ambesi-Impiombato A."/>
            <person name="Apweiler R."/>
            <person name="Aturaliya R.N."/>
            <person name="Bailey T.L."/>
            <person name="Bansal M."/>
            <person name="Baxter L."/>
            <person name="Beisel K.W."/>
            <person name="Bersano T."/>
            <person name="Bono H."/>
            <person name="Chalk A.M."/>
            <person name="Chiu K.P."/>
            <person name="Choudhary V."/>
            <person name="Christoffels A."/>
            <person name="Clutterbuck D.R."/>
            <person name="Crowe M.L."/>
            <person name="Dalla E."/>
            <person name="Dalrymple B.P."/>
            <person name="de Bono B."/>
            <person name="Della Gatta G."/>
            <person name="di Bernardo D."/>
            <person name="Down T."/>
            <person name="Engstrom P."/>
            <person name="Fagiolini M."/>
            <person name="Faulkner G."/>
            <person name="Fletcher C.F."/>
            <person name="Fukushima T."/>
            <person name="Furuno M."/>
            <person name="Futaki S."/>
            <person name="Gariboldi M."/>
            <person name="Georgii-Hemming P."/>
            <person name="Gingeras T.R."/>
            <person name="Gojobori T."/>
            <person name="Green R.E."/>
            <person name="Gustincich S."/>
            <person name="Harbers M."/>
            <person name="Hayashi Y."/>
            <person name="Hensch T.K."/>
            <person name="Hirokawa N."/>
            <person name="Hill D."/>
            <person name="Huminiecki L."/>
            <person name="Iacono M."/>
            <person name="Ikeo K."/>
            <person name="Iwama A."/>
            <person name="Ishikawa T."/>
            <person name="Jakt M."/>
            <person name="Kanapin A."/>
            <person name="Katoh M."/>
            <person name="Kawasawa Y."/>
            <person name="Kelso J."/>
            <person name="Kitamura H."/>
            <person name="Kitano H."/>
            <person name="Kollias G."/>
            <person name="Krishnan S.P."/>
            <person name="Kruger A."/>
            <person name="Kummerfeld S.K."/>
            <person name="Kurochkin I.V."/>
            <person name="Lareau L.F."/>
            <person name="Lazarevic D."/>
            <person name="Lipovich L."/>
            <person name="Liu J."/>
            <person name="Liuni S."/>
            <person name="McWilliam S."/>
            <person name="Madan Babu M."/>
            <person name="Madera M."/>
            <person name="Marchionni L."/>
            <person name="Matsuda H."/>
            <person name="Matsuzawa S."/>
            <person name="Miki H."/>
            <person name="Mignone F."/>
            <person name="Miyake S."/>
            <person name="Morris K."/>
            <person name="Mottagui-Tabar S."/>
            <person name="Mulder N."/>
            <person name="Nakano N."/>
            <person name="Nakauchi H."/>
            <person name="Ng P."/>
            <person name="Nilsson R."/>
            <person name="Nishiguchi S."/>
            <person name="Nishikawa S."/>
            <person name="Nori F."/>
            <person name="Ohara O."/>
            <person name="Okazaki Y."/>
            <person name="Orlando V."/>
            <person name="Pang K.C."/>
            <person name="Pavan W.J."/>
            <person name="Pavesi G."/>
            <person name="Pesole G."/>
            <person name="Petrovsky N."/>
            <person name="Piazza S."/>
            <person name="Reed J."/>
            <person name="Reid J.F."/>
            <person name="Ring B.Z."/>
            <person name="Ringwald M."/>
            <person name="Rost B."/>
            <person name="Ruan Y."/>
            <person name="Salzberg S.L."/>
            <person name="Sandelin A."/>
            <person name="Schneider C."/>
            <person name="Schoenbach C."/>
            <person name="Sekiguchi K."/>
            <person name="Semple C.A."/>
            <person name="Seno S."/>
            <person name="Sessa L."/>
            <person name="Sheng Y."/>
            <person name="Shibata Y."/>
            <person name="Shimada H."/>
            <person name="Shimada K."/>
            <person name="Silva D."/>
            <person name="Sinclair B."/>
            <person name="Sperling S."/>
            <person name="Stupka E."/>
            <person name="Sugiura K."/>
            <person name="Sultana R."/>
            <person name="Takenaka Y."/>
            <person name="Taki K."/>
            <person name="Tammoja K."/>
            <person name="Tan S.L."/>
            <person name="Tang S."/>
            <person name="Taylor M.S."/>
            <person name="Tegner J."/>
            <person name="Teichmann S.A."/>
            <person name="Ueda H.R."/>
            <person name="van Nimwegen E."/>
            <person name="Verardo R."/>
            <person name="Wei C.L."/>
            <person name="Yagi K."/>
            <person name="Yamanishi H."/>
            <person name="Zabarovsky E."/>
            <person name="Zhu S."/>
            <person name="Zimmer A."/>
            <person name="Hide W."/>
            <person name="Bult C."/>
            <person name="Grimmond S.M."/>
            <person name="Teasdale R.D."/>
            <person name="Liu E.T."/>
            <person name="Brusic V."/>
            <person name="Quackenbush J."/>
            <person name="Wahlestedt C."/>
            <person name="Mattick J.S."/>
            <person name="Hume D.A."/>
            <person name="Kai C."/>
            <person name="Sasaki D."/>
            <person name="Tomaru Y."/>
            <person name="Fukuda S."/>
            <person name="Kanamori-Katayama M."/>
            <person name="Suzuki M."/>
            <person name="Aoki J."/>
            <person name="Arakawa T."/>
            <person name="Iida J."/>
            <person name="Imamura K."/>
            <person name="Itoh M."/>
            <person name="Kato T."/>
            <person name="Kawaji H."/>
            <person name="Kawagashira N."/>
            <person name="Kawashima T."/>
            <person name="Kojima M."/>
            <person name="Kondo S."/>
            <person name="Konno H."/>
            <person name="Nakano K."/>
            <person name="Ninomiya N."/>
            <person name="Nishio T."/>
            <person name="Okada M."/>
            <person name="Plessy C."/>
            <person name="Shibata K."/>
            <person name="Shiraki T."/>
            <person name="Suzuki S."/>
            <person name="Tagami M."/>
            <person name="Waki K."/>
            <person name="Watahiki A."/>
            <person name="Okamura-Oho Y."/>
            <person name="Suzuki H."/>
            <person name="Kawai J."/>
            <person name="Hayashizaki Y."/>
        </authorList>
    </citation>
    <scope>NUCLEOTIDE SEQUENCE [LARGE SCALE MRNA]</scope>
    <source>
        <strain evidence="7">C57BL/6J</strain>
        <tissue evidence="7">Testis</tissue>
    </source>
</reference>
<reference key="2">
    <citation type="journal article" date="2009" name="PLoS Biol.">
        <title>Lineage-specific biology revealed by a finished genome assembly of the mouse.</title>
        <authorList>
            <person name="Church D.M."/>
            <person name="Goodstadt L."/>
            <person name="Hillier L.W."/>
            <person name="Zody M.C."/>
            <person name="Goldstein S."/>
            <person name="She X."/>
            <person name="Bult C.J."/>
            <person name="Agarwala R."/>
            <person name="Cherry J.L."/>
            <person name="DiCuccio M."/>
            <person name="Hlavina W."/>
            <person name="Kapustin Y."/>
            <person name="Meric P."/>
            <person name="Maglott D."/>
            <person name="Birtle Z."/>
            <person name="Marques A.C."/>
            <person name="Graves T."/>
            <person name="Zhou S."/>
            <person name="Teague B."/>
            <person name="Potamousis K."/>
            <person name="Churas C."/>
            <person name="Place M."/>
            <person name="Herschleb J."/>
            <person name="Runnheim R."/>
            <person name="Forrest D."/>
            <person name="Amos-Landgraf J."/>
            <person name="Schwartz D.C."/>
            <person name="Cheng Z."/>
            <person name="Lindblad-Toh K."/>
            <person name="Eichler E.E."/>
            <person name="Ponting C.P."/>
        </authorList>
    </citation>
    <scope>NUCLEOTIDE SEQUENCE [LARGE SCALE GENOMIC DNA]</scope>
    <source>
        <strain>C57BL/6J</strain>
    </source>
</reference>
<reference evidence="6" key="3">
    <citation type="journal article" date="2004" name="Genome Res.">
        <title>The status, quality, and expansion of the NIH full-length cDNA project: the Mammalian Gene Collection (MGC).</title>
        <authorList>
            <consortium name="The MGC Project Team"/>
        </authorList>
    </citation>
    <scope>NUCLEOTIDE SEQUENCE [LARGE SCALE MRNA]</scope>
    <source>
        <tissue evidence="6">Testis</tissue>
    </source>
</reference>
<reference evidence="5" key="4">
    <citation type="journal article" date="2005" name="Biochem. Biophys. Res. Commun.">
        <title>The evolution of a genetic locus encoding small serine proteinase inhibitors.</title>
        <authorList>
            <person name="Clauss A."/>
            <person name="Lilja H."/>
            <person name="Lundwall A."/>
        </authorList>
    </citation>
    <scope>IDENTIFICATION</scope>
</reference>
<feature type="signal peptide" evidence="3">
    <location>
        <begin position="1"/>
        <end position="20"/>
    </location>
</feature>
<feature type="chain" id="PRO_0000343831" description="WAP four-disulfide core domain protein 15A" evidence="3">
    <location>
        <begin position="21"/>
        <end position="80"/>
    </location>
</feature>
<feature type="domain" description="WAP" evidence="4">
    <location>
        <begin position="29"/>
        <end position="76"/>
    </location>
</feature>
<feature type="disulfide bond" evidence="2 4">
    <location>
        <begin position="36"/>
        <end position="64"/>
    </location>
</feature>
<feature type="disulfide bond" evidence="2 4">
    <location>
        <begin position="43"/>
        <end position="68"/>
    </location>
</feature>
<feature type="disulfide bond" evidence="2 4">
    <location>
        <begin position="51"/>
        <end position="63"/>
    </location>
</feature>
<feature type="disulfide bond" evidence="2 4">
    <location>
        <begin position="57"/>
        <end position="72"/>
    </location>
</feature>